<comment type="function">
    <text>Catalyzes the hydrolytic dehalogenation of small (R)-2-haloalkanoic acids to yield the corresponding (S)-2-hydroxyalkanoic acids. Acts on acids of short chain lengths, C(2) to C(4), with inversion of configuration at C-2.</text>
</comment>
<comment type="catalytic activity">
    <reaction>
        <text>an (R)-2-haloacid + H2O = a (2S)-2-hydroxycarboxylate + a halide anion + H(+)</text>
        <dbReference type="Rhea" id="RHEA:22188"/>
        <dbReference type="ChEBI" id="CHEBI:15377"/>
        <dbReference type="ChEBI" id="CHEBI:15378"/>
        <dbReference type="ChEBI" id="CHEBI:16042"/>
        <dbReference type="ChEBI" id="CHEBI:58123"/>
        <dbReference type="ChEBI" id="CHEBI:137406"/>
        <dbReference type="EC" id="3.8.1.9"/>
    </reaction>
</comment>
<comment type="similarity">
    <text evidence="1">Belongs to the HAD-like hydrolase superfamily. S-2-haloalkanoic acid dehalogenase family.</text>
</comment>
<comment type="sequence caution" evidence="1">
    <conflict type="miscellaneous discrepancy">
        <sequence resource="EMBL-CDS" id="CAA63793"/>
    </conflict>
    <text>Several sequencing errors.</text>
</comment>
<reference key="1">
    <citation type="journal article" date="1996" name="Eur. J. Biochem.">
        <title>Cloning, sequencing and expression in Escherichia coli of two Rhizobium sp. genes encoding haloalkanoate dehalogenases of opposite stereospecificity.</title>
        <authorList>
            <person name="Cairns S.S."/>
            <person name="Cornish A."/>
            <person name="Cooper R.A."/>
        </authorList>
    </citation>
    <scope>NUCLEOTIDE SEQUENCE [GENOMIC DNA]</scope>
    <scope>PROTEIN SEQUENCE OF 1-8</scope>
</reference>
<reference key="2">
    <citation type="journal article" date="2005" name="Biodegradation">
        <title>Biochemical and molecular characterisation of the 2,3-dichloro-1-propanol dehalogenase and stereospecific haloalkanoic dehalogenases from a versatile Agrobacterium sp.</title>
        <authorList>
            <person name="Higgins T.P."/>
            <person name="Hope S.J."/>
            <person name="Effendi A.J."/>
            <person name="Dawson S.S."/>
            <person name="Dancer B.N."/>
        </authorList>
    </citation>
    <scope>NUCLEOTIDE SEQUENCE [GENOMIC DNA]</scope>
</reference>
<proteinExistence type="evidence at protein level"/>
<dbReference type="EC" id="3.8.1.9"/>
<dbReference type="EMBL" id="X93597">
    <property type="protein sequence ID" value="CAA63793.1"/>
    <property type="status" value="ALT_SEQ"/>
    <property type="molecule type" value="Genomic_DNA"/>
</dbReference>
<dbReference type="EMBL" id="AJ488572">
    <property type="protein sequence ID" value="CAD56483.1"/>
    <property type="molecule type" value="Genomic_DNA"/>
</dbReference>
<dbReference type="PIR" id="S62363">
    <property type="entry name" value="S62363"/>
</dbReference>
<dbReference type="SMR" id="Q8KLS9"/>
<dbReference type="BRENDA" id="3.8.1.9">
    <property type="organism ID" value="206"/>
</dbReference>
<dbReference type="GO" id="GO:0033975">
    <property type="term" value="F:(R)-2-haloacid dehalogenase activity"/>
    <property type="evidence" value="ECO:0007669"/>
    <property type="project" value="UniProtKB-EC"/>
</dbReference>
<dbReference type="Gene3D" id="1.20.1290.10">
    <property type="entry name" value="AhpD-like"/>
    <property type="match status" value="2"/>
</dbReference>
<dbReference type="InterPro" id="IPR029032">
    <property type="entry name" value="AhpD-like"/>
</dbReference>
<evidence type="ECO:0000305" key="1"/>
<feature type="chain" id="PRO_0000079170" description="(R)-2-haloacid dehalogenase">
    <location>
        <begin position="1"/>
        <end position="257"/>
    </location>
</feature>
<protein>
    <recommendedName>
        <fullName>(R)-2-haloacid dehalogenase</fullName>
        <ecNumber>3.8.1.9</ecNumber>
    </recommendedName>
    <alternativeName>
        <fullName>D-2-haloacid dehalogenase</fullName>
    </alternativeName>
    <alternativeName>
        <fullName>D-DEX</fullName>
    </alternativeName>
    <alternativeName>
        <fullName>D-specific mono chloro propionoic acid dehalogenase</fullName>
    </alternativeName>
    <alternativeName>
        <fullName>DehIII</fullName>
    </alternativeName>
</protein>
<gene>
    <name type="primary">dehI</name>
    <name type="synonym">dehD</name>
</gene>
<organism>
    <name type="scientific">Rhizobium sp. (strain NHG3)</name>
    <dbReference type="NCBI Taxonomy" id="196607"/>
    <lineage>
        <taxon>Bacteria</taxon>
        <taxon>Pseudomonadati</taxon>
        <taxon>Pseudomonadota</taxon>
        <taxon>Alphaproteobacteria</taxon>
        <taxon>Hyphomicrobiales</taxon>
        <taxon>Rhizobiaceae</taxon>
        <taxon>Rhizobium/Agrobacterium group</taxon>
        <taxon>Rhizobium</taxon>
    </lineage>
</organism>
<accession>Q8KLS9</accession>
<accession>Q53186</accession>
<sequence length="257" mass="28838">MIDLPRHPPSMLPVIRTVPEHAATGELKRRYDAVKSAFDVPWMGVVAMAHTQYPRFFDALWEGFEPIAGTRAFQDACRAMRAATEAGVERSLGISPLAHRLQDLGYDPREIGEIRTIIEVFSHGNYPYILLATVSRYLLSGGDLSGEPQVFETSPRSPHIFHQPILMEPHHADEHTRGIFADIQATLALPILNTDYRALARWPSYFHLAWAELRPLIRTPSHAALSQQLHEQAIAVLRTLPNPARLKGDMVTRGCGR</sequence>
<keyword id="KW-0903">Direct protein sequencing</keyword>
<keyword id="KW-0378">Hydrolase</keyword>
<name>HADD_RHISH</name>